<gene>
    <name evidence="5" type="primary">nagI</name>
</gene>
<proteinExistence type="evidence at protein level"/>
<comment type="function">
    <text evidence="2">Catalyzes the oxygen-dependent ring fission of gentisate between the carboxyl and proximal hydroxyl groups at positions 1 and 2 of the aromatic ring to form maleylpyruvate. Can also catalyze oxidation of alkyl- and halogenated gentisates. Exhibits higher affinity for 3-substituted gentisates than for gentisate but has higher activity with gentisate.</text>
</comment>
<comment type="catalytic activity">
    <reaction evidence="2">
        <text>2,5-dihydroxybenzoate + O2 = 3-maleylpyruvate + H(+)</text>
        <dbReference type="Rhea" id="RHEA:18237"/>
        <dbReference type="ChEBI" id="CHEBI:15378"/>
        <dbReference type="ChEBI" id="CHEBI:15379"/>
        <dbReference type="ChEBI" id="CHEBI:16727"/>
        <dbReference type="ChEBI" id="CHEBI:58044"/>
        <dbReference type="EC" id="1.13.11.4"/>
    </reaction>
</comment>
<comment type="biophysicochemical properties">
    <kinetics>
        <KM evidence="2">22.4 uM for gentisate</KM>
        <KM evidence="2">10.7 uM for 3-methylgentisate</KM>
        <KM evidence="2">5.3 uM for 3-bromogentisate</KM>
    </kinetics>
</comment>
<comment type="pathway">
    <text evidence="2">Aromatic compound metabolism; naphthalene degradation.</text>
</comment>
<comment type="similarity">
    <text evidence="4">Belongs to the gentisate 1,2-dioxygenase family.</text>
</comment>
<organism>
    <name type="scientific">Ralstonia sp</name>
    <dbReference type="NCBI Taxonomy" id="54061"/>
    <lineage>
        <taxon>Bacteria</taxon>
        <taxon>Pseudomonadati</taxon>
        <taxon>Pseudomonadota</taxon>
        <taxon>Betaproteobacteria</taxon>
        <taxon>Burkholderiales</taxon>
        <taxon>Burkholderiaceae</taxon>
        <taxon>Ralstonia</taxon>
    </lineage>
</organism>
<sequence>MLDEEERITMSHELGRLEDLPQDYRDELKQLNLVPLWPSLRAVLPPNVPTRQTQPTYWSYQTLKPLLLKAGELTPIEKAERRVLVLANPGHGLEKMQASAAIYLGMQLLLPGEWAPSHRHTPNAVRMIVEGEGAYTTVDGEKCPMSRGDLILTPTGLWHEHGHDGNEPVVWLDVLDLPLVYYMEASYHIDGERQQVDPGRGDCAWTRAGVVPTPVFQRSDKRYPLLRYPWADTRAALLSLAADQPEQECVQVTYVNPETGDDAENILGFYALMLKPGQTLRLPVRSPAVVFHQIEGRSEARIAESTFALREADTCCAPGYTEVTLKNLSADQPSFIFMADESPLHRKLGVFENRG</sequence>
<keyword id="KW-0058">Aromatic hydrocarbons catabolism</keyword>
<keyword id="KW-0223">Dioxygenase</keyword>
<keyword id="KW-0560">Oxidoreductase</keyword>
<keyword id="KW-0614">Plasmid</keyword>
<feature type="chain" id="PRO_0000421467" description="Gentisate 1,2-dioxygenase">
    <location>
        <begin position="1"/>
        <end position="355"/>
    </location>
</feature>
<feature type="domain" description="Cupin type-2" evidence="1">
    <location>
        <begin position="106"/>
        <end position="174"/>
    </location>
</feature>
<protein>
    <recommendedName>
        <fullName evidence="3">Gentisate 1,2-dioxygenase</fullName>
        <shortName evidence="3">GDO</shortName>
        <ecNumber evidence="2">1.13.11.4</ecNumber>
    </recommendedName>
    <alternativeName>
        <fullName>Naphthalene degradation protein I</fullName>
    </alternativeName>
</protein>
<geneLocation type="plasmid" evidence="5">
    <name>pWWU2</name>
</geneLocation>
<evidence type="ECO:0000255" key="1"/>
<evidence type="ECO:0000269" key="2">
    <source>
    </source>
</evidence>
<evidence type="ECO:0000303" key="3">
    <source>
    </source>
</evidence>
<evidence type="ECO:0000305" key="4"/>
<evidence type="ECO:0000312" key="5">
    <source>
        <dbReference type="EMBL" id="AAD12619.1"/>
    </source>
</evidence>
<accession>O86041</accession>
<name>GNTDO_RALSP</name>
<dbReference type="EC" id="1.13.11.4" evidence="2"/>
<dbReference type="EMBL" id="AF036940">
    <property type="protein sequence ID" value="AAD12619.1"/>
    <property type="molecule type" value="Genomic_DNA"/>
</dbReference>
<dbReference type="SMR" id="O86041"/>
<dbReference type="BioCyc" id="MetaCyc:MONOMER-14769"/>
<dbReference type="SABIO-RK" id="O86041"/>
<dbReference type="UniPathway" id="UPA00082"/>
<dbReference type="GO" id="GO:0047922">
    <property type="term" value="F:gentisate 1,2-dioxygenase activity"/>
    <property type="evidence" value="ECO:0000314"/>
    <property type="project" value="UniProtKB"/>
</dbReference>
<dbReference type="GO" id="GO:1901170">
    <property type="term" value="P:naphthalene catabolic process"/>
    <property type="evidence" value="ECO:0000314"/>
    <property type="project" value="UniProtKB"/>
</dbReference>
<dbReference type="CDD" id="cd02216">
    <property type="entry name" value="cupin_GDO-like_N"/>
    <property type="match status" value="1"/>
</dbReference>
<dbReference type="Gene3D" id="2.60.120.10">
    <property type="entry name" value="Jelly Rolls"/>
    <property type="match status" value="1"/>
</dbReference>
<dbReference type="InterPro" id="IPR013096">
    <property type="entry name" value="Cupin_2"/>
</dbReference>
<dbReference type="InterPro" id="IPR047183">
    <property type="entry name" value="GDO-like"/>
</dbReference>
<dbReference type="InterPro" id="IPR014710">
    <property type="entry name" value="RmlC-like_jellyroll"/>
</dbReference>
<dbReference type="InterPro" id="IPR011051">
    <property type="entry name" value="RmlC_Cupin_sf"/>
</dbReference>
<dbReference type="PANTHER" id="PTHR41517">
    <property type="entry name" value="1,2-DIOXYGENASE PROTEIN-RELATED"/>
    <property type="match status" value="1"/>
</dbReference>
<dbReference type="PANTHER" id="PTHR41517:SF1">
    <property type="entry name" value="CUPIN"/>
    <property type="match status" value="1"/>
</dbReference>
<dbReference type="Pfam" id="PF07883">
    <property type="entry name" value="Cupin_2"/>
    <property type="match status" value="1"/>
</dbReference>
<dbReference type="SUPFAM" id="SSF51182">
    <property type="entry name" value="RmlC-like cupins"/>
    <property type="match status" value="1"/>
</dbReference>
<reference evidence="4 5" key="1">
    <citation type="journal article" date="2001" name="J. Bacteriol.">
        <title>nag genes of Ralstonia (formerly Pseudomonas) sp. strain U2 encoding enzymes for gentisate catabolism.</title>
        <authorList>
            <person name="Zhou N.Y."/>
            <person name="Fuenmayor S.L."/>
            <person name="Williams P.A."/>
        </authorList>
    </citation>
    <scope>NUCLEOTIDE SEQUENCE [GENOMIC DNA]</scope>
    <scope>FUNCTION</scope>
    <scope>CATALYTIC ACTIVITY</scope>
    <scope>SUBSTRATE SPECIFICITY</scope>
    <scope>BIOPHYSICOCHEMICAL PROPERTIES</scope>
    <scope>PATHWAY</scope>
    <source>
        <strain evidence="5">U2</strain>
    </source>
</reference>